<reference key="1">
    <citation type="submission" date="2007-04" db="EMBL/GenBank/DDBJ databases">
        <title>Complete sequence of Pseudomonas mendocina ymp.</title>
        <authorList>
            <consortium name="US DOE Joint Genome Institute"/>
            <person name="Copeland A."/>
            <person name="Lucas S."/>
            <person name="Lapidus A."/>
            <person name="Barry K."/>
            <person name="Glavina del Rio T."/>
            <person name="Dalin E."/>
            <person name="Tice H."/>
            <person name="Pitluck S."/>
            <person name="Kiss H."/>
            <person name="Brettin T."/>
            <person name="Detter J.C."/>
            <person name="Bruce D."/>
            <person name="Han C."/>
            <person name="Schmutz J."/>
            <person name="Larimer F."/>
            <person name="Land M."/>
            <person name="Hauser L."/>
            <person name="Kyrpides N."/>
            <person name="Mikhailova N."/>
            <person name="Hersman L."/>
            <person name="Dubois J."/>
            <person name="Maurice P."/>
            <person name="Richardson P."/>
        </authorList>
    </citation>
    <scope>NUCLEOTIDE SEQUENCE [LARGE SCALE GENOMIC DNA]</scope>
    <source>
        <strain>ymp</strain>
    </source>
</reference>
<proteinExistence type="inferred from homology"/>
<gene>
    <name evidence="1" type="primary">cysD</name>
    <name type="ordered locus">Pmen_0890</name>
</gene>
<sequence>MLDKLTHLKQLEAESIHIIREVAAEFDNPVMLYSIGKDSAVMLHLARKAFFPGKLPFPVLHVDTRWKFQEMYRFREKMVSEMGLELITHINPDGVAQDMNPFTYGSAKHTDVMKTEGLKQALDKYGFDAAFGGARRDEEKSRAKERVYSFRDSKHRWDPKNQRPELWNVYNGKVKKGESIRVFPLSNWTELDIWQYIYLEQIPIVPLYFAAEREVVELNGTLVMIDDERILNYLTPEQKASIHKKMVRFRTLGCYPLTGAVESTAATLPDIIQEMLLTKTSERQGRVIDHDAAGSMEEKKRQGYF</sequence>
<evidence type="ECO:0000255" key="1">
    <source>
        <dbReference type="HAMAP-Rule" id="MF_00064"/>
    </source>
</evidence>
<organism>
    <name type="scientific">Ectopseudomonas mendocina (strain ymp)</name>
    <name type="common">Pseudomonas mendocina</name>
    <dbReference type="NCBI Taxonomy" id="399739"/>
    <lineage>
        <taxon>Bacteria</taxon>
        <taxon>Pseudomonadati</taxon>
        <taxon>Pseudomonadota</taxon>
        <taxon>Gammaproteobacteria</taxon>
        <taxon>Pseudomonadales</taxon>
        <taxon>Pseudomonadaceae</taxon>
        <taxon>Ectopseudomonas</taxon>
    </lineage>
</organism>
<comment type="function">
    <text evidence="1">With CysN forms the ATP sulfurylase (ATPS) that catalyzes the adenylation of sulfate producing adenosine 5'-phosphosulfate (APS) and diphosphate, the first enzymatic step in sulfur assimilation pathway. APS synthesis involves the formation of a high-energy phosphoric-sulfuric acid anhydride bond driven by GTP hydrolysis by CysN coupled to ATP hydrolysis by CysD.</text>
</comment>
<comment type="catalytic activity">
    <reaction evidence="1">
        <text>sulfate + ATP + H(+) = adenosine 5'-phosphosulfate + diphosphate</text>
        <dbReference type="Rhea" id="RHEA:18133"/>
        <dbReference type="ChEBI" id="CHEBI:15378"/>
        <dbReference type="ChEBI" id="CHEBI:16189"/>
        <dbReference type="ChEBI" id="CHEBI:30616"/>
        <dbReference type="ChEBI" id="CHEBI:33019"/>
        <dbReference type="ChEBI" id="CHEBI:58243"/>
        <dbReference type="EC" id="2.7.7.4"/>
    </reaction>
</comment>
<comment type="pathway">
    <text evidence="1">Sulfur metabolism; hydrogen sulfide biosynthesis; sulfite from sulfate: step 1/3.</text>
</comment>
<comment type="subunit">
    <text evidence="1">Heterodimer composed of CysD, the smaller subunit, and CysN.</text>
</comment>
<comment type="similarity">
    <text evidence="1">Belongs to the PAPS reductase family. CysD subfamily.</text>
</comment>
<name>CYSD_ECTM1</name>
<accession>A4XQP2</accession>
<protein>
    <recommendedName>
        <fullName evidence="1">Sulfate adenylyltransferase subunit 2</fullName>
        <ecNumber evidence="1">2.7.7.4</ecNumber>
    </recommendedName>
    <alternativeName>
        <fullName evidence="1">ATP-sulfurylase small subunit</fullName>
    </alternativeName>
    <alternativeName>
        <fullName evidence="1">Sulfate adenylate transferase</fullName>
        <shortName evidence="1">SAT</shortName>
    </alternativeName>
</protein>
<feature type="chain" id="PRO_1000008970" description="Sulfate adenylyltransferase subunit 2">
    <location>
        <begin position="1"/>
        <end position="305"/>
    </location>
</feature>
<keyword id="KW-0067">ATP-binding</keyword>
<keyword id="KW-0547">Nucleotide-binding</keyword>
<keyword id="KW-0548">Nucleotidyltransferase</keyword>
<keyword id="KW-0808">Transferase</keyword>
<dbReference type="EC" id="2.7.7.4" evidence="1"/>
<dbReference type="EMBL" id="CP000680">
    <property type="protein sequence ID" value="ABP83658.1"/>
    <property type="molecule type" value="Genomic_DNA"/>
</dbReference>
<dbReference type="SMR" id="A4XQP2"/>
<dbReference type="STRING" id="399739.Pmen_0890"/>
<dbReference type="KEGG" id="pmy:Pmen_0890"/>
<dbReference type="PATRIC" id="fig|399739.8.peg.899"/>
<dbReference type="eggNOG" id="COG0175">
    <property type="taxonomic scope" value="Bacteria"/>
</dbReference>
<dbReference type="HOGENOM" id="CLU_043026_0_0_6"/>
<dbReference type="OrthoDB" id="9772604at2"/>
<dbReference type="UniPathway" id="UPA00140">
    <property type="reaction ID" value="UER00204"/>
</dbReference>
<dbReference type="GO" id="GO:0005524">
    <property type="term" value="F:ATP binding"/>
    <property type="evidence" value="ECO:0007669"/>
    <property type="project" value="UniProtKB-KW"/>
</dbReference>
<dbReference type="GO" id="GO:0004781">
    <property type="term" value="F:sulfate adenylyltransferase (ATP) activity"/>
    <property type="evidence" value="ECO:0007669"/>
    <property type="project" value="UniProtKB-UniRule"/>
</dbReference>
<dbReference type="GO" id="GO:0070814">
    <property type="term" value="P:hydrogen sulfide biosynthetic process"/>
    <property type="evidence" value="ECO:0007669"/>
    <property type="project" value="UniProtKB-UniRule"/>
</dbReference>
<dbReference type="GO" id="GO:0000103">
    <property type="term" value="P:sulfate assimilation"/>
    <property type="evidence" value="ECO:0007669"/>
    <property type="project" value="UniProtKB-UniRule"/>
</dbReference>
<dbReference type="CDD" id="cd23946">
    <property type="entry name" value="Sulfate_adenylyltransferase_2"/>
    <property type="match status" value="1"/>
</dbReference>
<dbReference type="FunFam" id="3.40.50.620:FF:000002">
    <property type="entry name" value="Sulfate adenylyltransferase subunit 2"/>
    <property type="match status" value="1"/>
</dbReference>
<dbReference type="Gene3D" id="3.40.50.620">
    <property type="entry name" value="HUPs"/>
    <property type="match status" value="1"/>
</dbReference>
<dbReference type="HAMAP" id="MF_00064">
    <property type="entry name" value="Sulf_adenylyltr_sub2"/>
    <property type="match status" value="1"/>
</dbReference>
<dbReference type="InterPro" id="IPR002500">
    <property type="entry name" value="PAPS_reduct_dom"/>
</dbReference>
<dbReference type="InterPro" id="IPR014729">
    <property type="entry name" value="Rossmann-like_a/b/a_fold"/>
</dbReference>
<dbReference type="InterPro" id="IPR011784">
    <property type="entry name" value="SO4_adenylTrfase_ssu"/>
</dbReference>
<dbReference type="InterPro" id="IPR050128">
    <property type="entry name" value="Sulfate_adenylyltrnsfr_sub2"/>
</dbReference>
<dbReference type="NCBIfam" id="TIGR02039">
    <property type="entry name" value="CysD"/>
    <property type="match status" value="1"/>
</dbReference>
<dbReference type="NCBIfam" id="NF003587">
    <property type="entry name" value="PRK05253.1"/>
    <property type="match status" value="1"/>
</dbReference>
<dbReference type="NCBIfam" id="NF009214">
    <property type="entry name" value="PRK12563.1"/>
    <property type="match status" value="1"/>
</dbReference>
<dbReference type="PANTHER" id="PTHR43196">
    <property type="entry name" value="SULFATE ADENYLYLTRANSFERASE SUBUNIT 2"/>
    <property type="match status" value="1"/>
</dbReference>
<dbReference type="PANTHER" id="PTHR43196:SF1">
    <property type="entry name" value="SULFATE ADENYLYLTRANSFERASE SUBUNIT 2"/>
    <property type="match status" value="1"/>
</dbReference>
<dbReference type="Pfam" id="PF01507">
    <property type="entry name" value="PAPS_reduct"/>
    <property type="match status" value="1"/>
</dbReference>
<dbReference type="PIRSF" id="PIRSF002936">
    <property type="entry name" value="CysDAde_trans"/>
    <property type="match status" value="1"/>
</dbReference>
<dbReference type="SUPFAM" id="SSF52402">
    <property type="entry name" value="Adenine nucleotide alpha hydrolases-like"/>
    <property type="match status" value="1"/>
</dbReference>